<evidence type="ECO:0000255" key="1">
    <source>
        <dbReference type="HAMAP-Rule" id="MF_01103"/>
    </source>
</evidence>
<name>Y1198_LACLS</name>
<sequence>MTITNEQVERINELARKKKAEGLSEAELEEQAFLRRAYLDSVKANFRSQVETIKVIDEKTGEDVTPDKLKEIQRKNGMRD</sequence>
<gene>
    <name type="ordered locus">LACR_1198</name>
</gene>
<protein>
    <recommendedName>
        <fullName evidence="1">UPF0291 protein LACR_1198</fullName>
    </recommendedName>
</protein>
<organism>
    <name type="scientific">Lactococcus lactis subsp. cremoris (strain SK11)</name>
    <dbReference type="NCBI Taxonomy" id="272622"/>
    <lineage>
        <taxon>Bacteria</taxon>
        <taxon>Bacillati</taxon>
        <taxon>Bacillota</taxon>
        <taxon>Bacilli</taxon>
        <taxon>Lactobacillales</taxon>
        <taxon>Streptococcaceae</taxon>
        <taxon>Lactococcus</taxon>
        <taxon>Lactococcus cremoris subsp. cremoris</taxon>
    </lineage>
</organism>
<accession>Q02Z92</accession>
<proteinExistence type="inferred from homology"/>
<dbReference type="EMBL" id="CP000425">
    <property type="protein sequence ID" value="ABJ72730.1"/>
    <property type="molecule type" value="Genomic_DNA"/>
</dbReference>
<dbReference type="RefSeq" id="WP_011676103.1">
    <property type="nucleotide sequence ID" value="NC_008527.1"/>
</dbReference>
<dbReference type="SMR" id="Q02Z92"/>
<dbReference type="KEGG" id="llc:LACR_1198"/>
<dbReference type="HOGENOM" id="CLU_173137_0_2_9"/>
<dbReference type="Proteomes" id="UP000000240">
    <property type="component" value="Chromosome"/>
</dbReference>
<dbReference type="GO" id="GO:0005737">
    <property type="term" value="C:cytoplasm"/>
    <property type="evidence" value="ECO:0007669"/>
    <property type="project" value="UniProtKB-SubCell"/>
</dbReference>
<dbReference type="Gene3D" id="1.10.287.540">
    <property type="entry name" value="Helix hairpin bin"/>
    <property type="match status" value="1"/>
</dbReference>
<dbReference type="HAMAP" id="MF_01103">
    <property type="entry name" value="UPF0291"/>
    <property type="match status" value="1"/>
</dbReference>
<dbReference type="InterPro" id="IPR009242">
    <property type="entry name" value="DUF896"/>
</dbReference>
<dbReference type="PANTHER" id="PTHR37300">
    <property type="entry name" value="UPF0291 PROTEIN CBO2609/CLC_2481"/>
    <property type="match status" value="1"/>
</dbReference>
<dbReference type="PANTHER" id="PTHR37300:SF1">
    <property type="entry name" value="UPF0291 PROTEIN YNZC"/>
    <property type="match status" value="1"/>
</dbReference>
<dbReference type="Pfam" id="PF05979">
    <property type="entry name" value="DUF896"/>
    <property type="match status" value="1"/>
</dbReference>
<dbReference type="SUPFAM" id="SSF158221">
    <property type="entry name" value="YnzC-like"/>
    <property type="match status" value="1"/>
</dbReference>
<feature type="chain" id="PRO_1000065027" description="UPF0291 protein LACR_1198">
    <location>
        <begin position="1"/>
        <end position="80"/>
    </location>
</feature>
<keyword id="KW-0963">Cytoplasm</keyword>
<reference key="1">
    <citation type="journal article" date="2006" name="Proc. Natl. Acad. Sci. U.S.A.">
        <title>Comparative genomics of the lactic acid bacteria.</title>
        <authorList>
            <person name="Makarova K.S."/>
            <person name="Slesarev A."/>
            <person name="Wolf Y.I."/>
            <person name="Sorokin A."/>
            <person name="Mirkin B."/>
            <person name="Koonin E.V."/>
            <person name="Pavlov A."/>
            <person name="Pavlova N."/>
            <person name="Karamychev V."/>
            <person name="Polouchine N."/>
            <person name="Shakhova V."/>
            <person name="Grigoriev I."/>
            <person name="Lou Y."/>
            <person name="Rohksar D."/>
            <person name="Lucas S."/>
            <person name="Huang K."/>
            <person name="Goodstein D.M."/>
            <person name="Hawkins T."/>
            <person name="Plengvidhya V."/>
            <person name="Welker D."/>
            <person name="Hughes J."/>
            <person name="Goh Y."/>
            <person name="Benson A."/>
            <person name="Baldwin K."/>
            <person name="Lee J.-H."/>
            <person name="Diaz-Muniz I."/>
            <person name="Dosti B."/>
            <person name="Smeianov V."/>
            <person name="Wechter W."/>
            <person name="Barabote R."/>
            <person name="Lorca G."/>
            <person name="Altermann E."/>
            <person name="Barrangou R."/>
            <person name="Ganesan B."/>
            <person name="Xie Y."/>
            <person name="Rawsthorne H."/>
            <person name="Tamir D."/>
            <person name="Parker C."/>
            <person name="Breidt F."/>
            <person name="Broadbent J.R."/>
            <person name="Hutkins R."/>
            <person name="O'Sullivan D."/>
            <person name="Steele J."/>
            <person name="Unlu G."/>
            <person name="Saier M.H. Jr."/>
            <person name="Klaenhammer T."/>
            <person name="Richardson P."/>
            <person name="Kozyavkin S."/>
            <person name="Weimer B.C."/>
            <person name="Mills D.A."/>
        </authorList>
    </citation>
    <scope>NUCLEOTIDE SEQUENCE [LARGE SCALE GENOMIC DNA]</scope>
    <source>
        <strain>SK11</strain>
    </source>
</reference>
<comment type="subcellular location">
    <subcellularLocation>
        <location evidence="1">Cytoplasm</location>
    </subcellularLocation>
</comment>
<comment type="similarity">
    <text evidence="1">Belongs to the UPF0291 family.</text>
</comment>